<reference key="1">
    <citation type="journal article" date="2019" name="Toxins">
        <title>The diversified O-superfamily in Californiconus californicus presents a conotoxin with antimycobacterial activity.</title>
        <authorList>
            <person name="Bernaldez-Sarabia J."/>
            <person name="Figueroa-Montiel A."/>
            <person name="Duenas S."/>
            <person name="Cervantes-Luevano K."/>
            <person name="Beltran J.A."/>
            <person name="Ortiz E."/>
            <person name="Jimenez S."/>
            <person name="Possani L.D."/>
            <person name="Paniagua-Solis J.F."/>
            <person name="Gonzalez-Canudas J."/>
            <person name="Licea-Navarro A."/>
        </authorList>
    </citation>
    <scope>NUCLEOTIDE SEQUENCE [MRNA]</scope>
    <source>
        <tissue>Venom duct</tissue>
    </source>
</reference>
<comment type="function">
    <text evidence="3">Probable neurotoxin.</text>
</comment>
<comment type="subcellular location">
    <subcellularLocation>
        <location evidence="4">Secreted</location>
    </subcellularLocation>
</comment>
<comment type="tissue specificity">
    <text evidence="4">Expressed by the venom duct.</text>
</comment>
<comment type="domain">
    <text evidence="3">The cysteine framework is VI/VII (C-C-CC-C-C).</text>
</comment>
<comment type="domain">
    <text evidence="3">The presence of a 'disulfide through disulfide knot' structurally defines this protein as a knottin.</text>
</comment>
<comment type="similarity">
    <text evidence="3">Belongs to the conotoxin O1 superfamily.</text>
</comment>
<evidence type="ECO:0000255" key="1"/>
<evidence type="ECO:0000303" key="2">
    <source>
    </source>
</evidence>
<evidence type="ECO:0000305" key="3"/>
<evidence type="ECO:0000305" key="4">
    <source>
    </source>
</evidence>
<keyword id="KW-1015">Disulfide bond</keyword>
<keyword id="KW-0960">Knottin</keyword>
<keyword id="KW-0528">Neurotoxin</keyword>
<keyword id="KW-0964">Secreted</keyword>
<keyword id="KW-0732">Signal</keyword>
<keyword id="KW-0800">Toxin</keyword>
<organism>
    <name type="scientific">Californiconus californicus</name>
    <name type="common">California cone</name>
    <name type="synonym">Conus californicus</name>
    <dbReference type="NCBI Taxonomy" id="1736779"/>
    <lineage>
        <taxon>Eukaryota</taxon>
        <taxon>Metazoa</taxon>
        <taxon>Spiralia</taxon>
        <taxon>Lophotrochozoa</taxon>
        <taxon>Mollusca</taxon>
        <taxon>Gastropoda</taxon>
        <taxon>Caenogastropoda</taxon>
        <taxon>Neogastropoda</taxon>
        <taxon>Conoidea</taxon>
        <taxon>Conidae</taxon>
        <taxon>Californiconus</taxon>
    </lineage>
</organism>
<accession>P0DTZ6</accession>
<sequence length="57" mass="6094">MKLTCVLIVAVLILTACQVIAADSSCWFCSTGFNKCCESTGDCMTYPSEYNASCPEA</sequence>
<proteinExistence type="inferred from homology"/>
<protein>
    <recommendedName>
        <fullName evidence="3">Conotoxin Cal6.34</fullName>
    </recommendedName>
    <alternativeName>
        <fullName evidence="2">O1_cal6.34</fullName>
    </alternativeName>
</protein>
<dbReference type="GO" id="GO:0005576">
    <property type="term" value="C:extracellular region"/>
    <property type="evidence" value="ECO:0007669"/>
    <property type="project" value="UniProtKB-SubCell"/>
</dbReference>
<dbReference type="GO" id="GO:0090729">
    <property type="term" value="F:toxin activity"/>
    <property type="evidence" value="ECO:0007669"/>
    <property type="project" value="UniProtKB-KW"/>
</dbReference>
<name>O1634_CONCL</name>
<feature type="signal peptide" evidence="1">
    <location>
        <begin position="1"/>
        <end position="22"/>
    </location>
</feature>
<feature type="chain" id="PRO_0000450978" description="Conotoxin Cal6.34" evidence="3">
    <location>
        <begin position="23"/>
        <end position="57"/>
    </location>
</feature>
<feature type="disulfide bond" evidence="3">
    <location>
        <begin position="26"/>
        <end position="37"/>
    </location>
</feature>
<feature type="disulfide bond" evidence="3">
    <location>
        <begin position="29"/>
        <end position="43"/>
    </location>
</feature>
<feature type="disulfide bond" evidence="3">
    <location>
        <begin position="36"/>
        <end position="54"/>
    </location>
</feature>